<reference key="1">
    <citation type="journal article" date="2008" name="Genome Res.">
        <title>Comparative genome analysis of Salmonella enteritidis PT4 and Salmonella gallinarum 287/91 provides insights into evolutionary and host adaptation pathways.</title>
        <authorList>
            <person name="Thomson N.R."/>
            <person name="Clayton D.J."/>
            <person name="Windhorst D."/>
            <person name="Vernikos G."/>
            <person name="Davidson S."/>
            <person name="Churcher C."/>
            <person name="Quail M.A."/>
            <person name="Stevens M."/>
            <person name="Jones M.A."/>
            <person name="Watson M."/>
            <person name="Barron A."/>
            <person name="Layton A."/>
            <person name="Pickard D."/>
            <person name="Kingsley R.A."/>
            <person name="Bignell A."/>
            <person name="Clark L."/>
            <person name="Harris B."/>
            <person name="Ormond D."/>
            <person name="Abdellah Z."/>
            <person name="Brooks K."/>
            <person name="Cherevach I."/>
            <person name="Chillingworth T."/>
            <person name="Woodward J."/>
            <person name="Norberczak H."/>
            <person name="Lord A."/>
            <person name="Arrowsmith C."/>
            <person name="Jagels K."/>
            <person name="Moule S."/>
            <person name="Mungall K."/>
            <person name="Saunders M."/>
            <person name="Whitehead S."/>
            <person name="Chabalgoity J.A."/>
            <person name="Maskell D."/>
            <person name="Humphreys T."/>
            <person name="Roberts M."/>
            <person name="Barrow P.A."/>
            <person name="Dougan G."/>
            <person name="Parkhill J."/>
        </authorList>
    </citation>
    <scope>NUCLEOTIDE SEQUENCE [LARGE SCALE GENOMIC DNA]</scope>
    <source>
        <strain>P125109</strain>
    </source>
</reference>
<keyword id="KW-0067">ATP-binding</keyword>
<keyword id="KW-0963">Cytoplasm</keyword>
<keyword id="KW-0418">Kinase</keyword>
<keyword id="KW-0545">Nucleotide biosynthesis</keyword>
<keyword id="KW-0547">Nucleotide-binding</keyword>
<keyword id="KW-0808">Transferase</keyword>
<name>KAD_SALEP</name>
<feature type="chain" id="PRO_1000100602" description="Adenylate kinase">
    <location>
        <begin position="1"/>
        <end position="214"/>
    </location>
</feature>
<feature type="region of interest" description="NMP" evidence="1">
    <location>
        <begin position="30"/>
        <end position="59"/>
    </location>
</feature>
<feature type="region of interest" description="LID">
    <location>
        <begin position="122"/>
        <end position="159"/>
    </location>
</feature>
<feature type="binding site" evidence="1">
    <location>
        <begin position="10"/>
        <end position="15"/>
    </location>
    <ligand>
        <name>ATP</name>
        <dbReference type="ChEBI" id="CHEBI:30616"/>
    </ligand>
</feature>
<feature type="binding site" evidence="1">
    <location>
        <position position="31"/>
    </location>
    <ligand>
        <name>AMP</name>
        <dbReference type="ChEBI" id="CHEBI:456215"/>
    </ligand>
</feature>
<feature type="binding site" evidence="1">
    <location>
        <position position="36"/>
    </location>
    <ligand>
        <name>AMP</name>
        <dbReference type="ChEBI" id="CHEBI:456215"/>
    </ligand>
</feature>
<feature type="binding site" evidence="1">
    <location>
        <begin position="57"/>
        <end position="59"/>
    </location>
    <ligand>
        <name>AMP</name>
        <dbReference type="ChEBI" id="CHEBI:456215"/>
    </ligand>
</feature>
<feature type="binding site" evidence="1">
    <location>
        <begin position="85"/>
        <end position="88"/>
    </location>
    <ligand>
        <name>AMP</name>
        <dbReference type="ChEBI" id="CHEBI:456215"/>
    </ligand>
</feature>
<feature type="binding site" evidence="1">
    <location>
        <position position="92"/>
    </location>
    <ligand>
        <name>AMP</name>
        <dbReference type="ChEBI" id="CHEBI:456215"/>
    </ligand>
</feature>
<feature type="binding site" evidence="1">
    <location>
        <position position="123"/>
    </location>
    <ligand>
        <name>ATP</name>
        <dbReference type="ChEBI" id="CHEBI:30616"/>
    </ligand>
</feature>
<feature type="binding site" evidence="1">
    <location>
        <begin position="132"/>
        <end position="133"/>
    </location>
    <ligand>
        <name>ATP</name>
        <dbReference type="ChEBI" id="CHEBI:30616"/>
    </ligand>
</feature>
<feature type="binding site" evidence="1">
    <location>
        <position position="156"/>
    </location>
    <ligand>
        <name>AMP</name>
        <dbReference type="ChEBI" id="CHEBI:456215"/>
    </ligand>
</feature>
<feature type="binding site" evidence="1">
    <location>
        <position position="167"/>
    </location>
    <ligand>
        <name>AMP</name>
        <dbReference type="ChEBI" id="CHEBI:456215"/>
    </ligand>
</feature>
<feature type="binding site" evidence="1">
    <location>
        <position position="200"/>
    </location>
    <ligand>
        <name>ATP</name>
        <dbReference type="ChEBI" id="CHEBI:30616"/>
    </ligand>
</feature>
<sequence length="214" mass="23488">MRIILLGAPGAGKGTQAQFIMEKYGIPQISTGDMLRAAVKSGSELGKQAKDIMDAGKLVTDELVIALVKERIAQEDCRNGFLLDGFPRTIPQADAMKEAGIVVDYVLEFDVPDELIVDRIVGRRVHAASGRVYHVKFNPPKVEGKDDVTGEDLTTRKDDQEETVRKRLVEYHQMTAPLIGYYQKEAEAGNTKYAKVDGTQAVADVRAALEKILG</sequence>
<gene>
    <name evidence="1" type="primary">adk</name>
    <name type="ordered locus">SEN0469</name>
</gene>
<dbReference type="EC" id="2.7.4.3" evidence="1"/>
<dbReference type="EMBL" id="AM933172">
    <property type="protein sequence ID" value="CAR32055.1"/>
    <property type="molecule type" value="Genomic_DNA"/>
</dbReference>
<dbReference type="RefSeq" id="WP_001220237.1">
    <property type="nucleotide sequence ID" value="NC_011294.1"/>
</dbReference>
<dbReference type="SMR" id="B5QU77"/>
<dbReference type="KEGG" id="set:SEN0469"/>
<dbReference type="HOGENOM" id="CLU_032354_1_2_6"/>
<dbReference type="UniPathway" id="UPA00588">
    <property type="reaction ID" value="UER00649"/>
</dbReference>
<dbReference type="Proteomes" id="UP000000613">
    <property type="component" value="Chromosome"/>
</dbReference>
<dbReference type="GO" id="GO:0005737">
    <property type="term" value="C:cytoplasm"/>
    <property type="evidence" value="ECO:0007669"/>
    <property type="project" value="UniProtKB-SubCell"/>
</dbReference>
<dbReference type="GO" id="GO:0004017">
    <property type="term" value="F:adenylate kinase activity"/>
    <property type="evidence" value="ECO:0007669"/>
    <property type="project" value="UniProtKB-UniRule"/>
</dbReference>
<dbReference type="GO" id="GO:0005524">
    <property type="term" value="F:ATP binding"/>
    <property type="evidence" value="ECO:0007669"/>
    <property type="project" value="UniProtKB-UniRule"/>
</dbReference>
<dbReference type="GO" id="GO:0044209">
    <property type="term" value="P:AMP salvage"/>
    <property type="evidence" value="ECO:0007669"/>
    <property type="project" value="UniProtKB-UniRule"/>
</dbReference>
<dbReference type="CDD" id="cd01428">
    <property type="entry name" value="ADK"/>
    <property type="match status" value="1"/>
</dbReference>
<dbReference type="FunFam" id="3.40.50.300:FF:000106">
    <property type="entry name" value="Adenylate kinase mitochondrial"/>
    <property type="match status" value="1"/>
</dbReference>
<dbReference type="Gene3D" id="3.40.50.300">
    <property type="entry name" value="P-loop containing nucleotide triphosphate hydrolases"/>
    <property type="match status" value="1"/>
</dbReference>
<dbReference type="HAMAP" id="MF_00235">
    <property type="entry name" value="Adenylate_kinase_Adk"/>
    <property type="match status" value="1"/>
</dbReference>
<dbReference type="InterPro" id="IPR006259">
    <property type="entry name" value="Adenyl_kin_sub"/>
</dbReference>
<dbReference type="InterPro" id="IPR000850">
    <property type="entry name" value="Adenylat/UMP-CMP_kin"/>
</dbReference>
<dbReference type="InterPro" id="IPR033690">
    <property type="entry name" value="Adenylat_kinase_CS"/>
</dbReference>
<dbReference type="InterPro" id="IPR007862">
    <property type="entry name" value="Adenylate_kinase_lid-dom"/>
</dbReference>
<dbReference type="InterPro" id="IPR027417">
    <property type="entry name" value="P-loop_NTPase"/>
</dbReference>
<dbReference type="NCBIfam" id="TIGR01351">
    <property type="entry name" value="adk"/>
    <property type="match status" value="1"/>
</dbReference>
<dbReference type="NCBIfam" id="NF001379">
    <property type="entry name" value="PRK00279.1-1"/>
    <property type="match status" value="1"/>
</dbReference>
<dbReference type="NCBIfam" id="NF001380">
    <property type="entry name" value="PRK00279.1-2"/>
    <property type="match status" value="1"/>
</dbReference>
<dbReference type="NCBIfam" id="NF001381">
    <property type="entry name" value="PRK00279.1-3"/>
    <property type="match status" value="1"/>
</dbReference>
<dbReference type="NCBIfam" id="NF011100">
    <property type="entry name" value="PRK14527.1"/>
    <property type="match status" value="1"/>
</dbReference>
<dbReference type="PANTHER" id="PTHR23359">
    <property type="entry name" value="NUCLEOTIDE KINASE"/>
    <property type="match status" value="1"/>
</dbReference>
<dbReference type="Pfam" id="PF00406">
    <property type="entry name" value="ADK"/>
    <property type="match status" value="1"/>
</dbReference>
<dbReference type="Pfam" id="PF05191">
    <property type="entry name" value="ADK_lid"/>
    <property type="match status" value="1"/>
</dbReference>
<dbReference type="PRINTS" id="PR00094">
    <property type="entry name" value="ADENYLTKNASE"/>
</dbReference>
<dbReference type="SUPFAM" id="SSF52540">
    <property type="entry name" value="P-loop containing nucleoside triphosphate hydrolases"/>
    <property type="match status" value="1"/>
</dbReference>
<dbReference type="PROSITE" id="PS00113">
    <property type="entry name" value="ADENYLATE_KINASE"/>
    <property type="match status" value="1"/>
</dbReference>
<comment type="function">
    <text evidence="1">Catalyzes the reversible transfer of the terminal phosphate group between ATP and AMP. Plays an important role in cellular energy homeostasis and in adenine nucleotide metabolism.</text>
</comment>
<comment type="catalytic activity">
    <reaction evidence="1">
        <text>AMP + ATP = 2 ADP</text>
        <dbReference type="Rhea" id="RHEA:12973"/>
        <dbReference type="ChEBI" id="CHEBI:30616"/>
        <dbReference type="ChEBI" id="CHEBI:456215"/>
        <dbReference type="ChEBI" id="CHEBI:456216"/>
        <dbReference type="EC" id="2.7.4.3"/>
    </reaction>
</comment>
<comment type="pathway">
    <text evidence="1">Purine metabolism; AMP biosynthesis via salvage pathway; AMP from ADP: step 1/1.</text>
</comment>
<comment type="subunit">
    <text evidence="1">Monomer.</text>
</comment>
<comment type="subcellular location">
    <subcellularLocation>
        <location evidence="1">Cytoplasm</location>
    </subcellularLocation>
</comment>
<comment type="domain">
    <text evidence="1">Consists of three domains, a large central CORE domain and two small peripheral domains, NMPbind and LID, which undergo movements during catalysis. The LID domain closes over the site of phosphoryl transfer upon ATP binding. Assembling and dissambling the active center during each catalytic cycle provides an effective means to prevent ATP hydrolysis.</text>
</comment>
<comment type="similarity">
    <text evidence="1">Belongs to the adenylate kinase family.</text>
</comment>
<evidence type="ECO:0000255" key="1">
    <source>
        <dbReference type="HAMAP-Rule" id="MF_00235"/>
    </source>
</evidence>
<organism>
    <name type="scientific">Salmonella enteritidis PT4 (strain P125109)</name>
    <dbReference type="NCBI Taxonomy" id="550537"/>
    <lineage>
        <taxon>Bacteria</taxon>
        <taxon>Pseudomonadati</taxon>
        <taxon>Pseudomonadota</taxon>
        <taxon>Gammaproteobacteria</taxon>
        <taxon>Enterobacterales</taxon>
        <taxon>Enterobacteriaceae</taxon>
        <taxon>Salmonella</taxon>
    </lineage>
</organism>
<proteinExistence type="inferred from homology"/>
<accession>B5QU77</accession>
<protein>
    <recommendedName>
        <fullName evidence="1">Adenylate kinase</fullName>
        <shortName evidence="1">AK</shortName>
        <ecNumber evidence="1">2.7.4.3</ecNumber>
    </recommendedName>
    <alternativeName>
        <fullName evidence="1">ATP-AMP transphosphorylase</fullName>
    </alternativeName>
    <alternativeName>
        <fullName evidence="1">ATP:AMP phosphotransferase</fullName>
    </alternativeName>
    <alternativeName>
        <fullName evidence="1">Adenylate monophosphate kinase</fullName>
    </alternativeName>
</protein>